<feature type="chain" id="PRO_1000010145" description="Ribosomal RNA small subunit methyltransferase G">
    <location>
        <begin position="1"/>
        <end position="205"/>
    </location>
</feature>
<feature type="binding site" evidence="1">
    <location>
        <position position="76"/>
    </location>
    <ligand>
        <name>S-adenosyl-L-methionine</name>
        <dbReference type="ChEBI" id="CHEBI:59789"/>
    </ligand>
</feature>
<feature type="binding site" evidence="1">
    <location>
        <position position="81"/>
    </location>
    <ligand>
        <name>S-adenosyl-L-methionine</name>
        <dbReference type="ChEBI" id="CHEBI:59789"/>
    </ligand>
</feature>
<feature type="binding site" evidence="1">
    <location>
        <begin position="127"/>
        <end position="128"/>
    </location>
    <ligand>
        <name>S-adenosyl-L-methionine</name>
        <dbReference type="ChEBI" id="CHEBI:59789"/>
    </ligand>
</feature>
<feature type="binding site" evidence="1">
    <location>
        <position position="140"/>
    </location>
    <ligand>
        <name>S-adenosyl-L-methionine</name>
        <dbReference type="ChEBI" id="CHEBI:59789"/>
    </ligand>
</feature>
<comment type="function">
    <text evidence="1">Specifically methylates the N7 position of guanine in position 527 of 16S rRNA.</text>
</comment>
<comment type="catalytic activity">
    <reaction evidence="1">
        <text>guanosine(527) in 16S rRNA + S-adenosyl-L-methionine = N(7)-methylguanosine(527) in 16S rRNA + S-adenosyl-L-homocysteine</text>
        <dbReference type="Rhea" id="RHEA:42732"/>
        <dbReference type="Rhea" id="RHEA-COMP:10209"/>
        <dbReference type="Rhea" id="RHEA-COMP:10210"/>
        <dbReference type="ChEBI" id="CHEBI:57856"/>
        <dbReference type="ChEBI" id="CHEBI:59789"/>
        <dbReference type="ChEBI" id="CHEBI:74269"/>
        <dbReference type="ChEBI" id="CHEBI:74480"/>
        <dbReference type="EC" id="2.1.1.170"/>
    </reaction>
</comment>
<comment type="subcellular location">
    <subcellularLocation>
        <location evidence="1">Cytoplasm</location>
    </subcellularLocation>
</comment>
<comment type="similarity">
    <text evidence="1">Belongs to the methyltransferase superfamily. RNA methyltransferase RsmG family.</text>
</comment>
<sequence>MDIMKDKIRQALSELDILATEVQIDQWLDYLKLLEKWNKVYNMTAIKNIDEMLVKHLFDSLAVAKYIKGDSTVDVGTGGGLPGVVLAILYPQHQFTLVDSVGKKIMFLKNVKKSLSLNNINPLNTRIENLEGNFDNIISRAFSSVDTFYELCKHFLTEHNQMLAMKGRDLEERNLESLPLNIEKYSIKVPFLNAERNLIVIRKKL</sequence>
<dbReference type="EC" id="2.1.1.170" evidence="1"/>
<dbReference type="EMBL" id="AM286280">
    <property type="protein sequence ID" value="CAL09703.1"/>
    <property type="molecule type" value="Genomic_DNA"/>
</dbReference>
<dbReference type="RefSeq" id="WP_003017602.1">
    <property type="nucleotide sequence ID" value="NC_008245.1"/>
</dbReference>
<dbReference type="SMR" id="Q14FV3"/>
<dbReference type="KEGG" id="ftf:FTF1687c"/>
<dbReference type="HOGENOM" id="CLU_065341_2_2_6"/>
<dbReference type="GO" id="GO:0005829">
    <property type="term" value="C:cytosol"/>
    <property type="evidence" value="ECO:0007669"/>
    <property type="project" value="TreeGrafter"/>
</dbReference>
<dbReference type="GO" id="GO:0070043">
    <property type="term" value="F:rRNA (guanine-N7-)-methyltransferase activity"/>
    <property type="evidence" value="ECO:0007669"/>
    <property type="project" value="UniProtKB-UniRule"/>
</dbReference>
<dbReference type="Gene3D" id="3.40.50.150">
    <property type="entry name" value="Vaccinia Virus protein VP39"/>
    <property type="match status" value="1"/>
</dbReference>
<dbReference type="HAMAP" id="MF_00074">
    <property type="entry name" value="16SrRNA_methyltr_G"/>
    <property type="match status" value="1"/>
</dbReference>
<dbReference type="InterPro" id="IPR003682">
    <property type="entry name" value="rRNA_ssu_MeTfrase_G"/>
</dbReference>
<dbReference type="InterPro" id="IPR029063">
    <property type="entry name" value="SAM-dependent_MTases_sf"/>
</dbReference>
<dbReference type="NCBIfam" id="TIGR00138">
    <property type="entry name" value="rsmG_gidB"/>
    <property type="match status" value="1"/>
</dbReference>
<dbReference type="PANTHER" id="PTHR31760">
    <property type="entry name" value="S-ADENOSYL-L-METHIONINE-DEPENDENT METHYLTRANSFERASES SUPERFAMILY PROTEIN"/>
    <property type="match status" value="1"/>
</dbReference>
<dbReference type="PANTHER" id="PTHR31760:SF0">
    <property type="entry name" value="S-ADENOSYL-L-METHIONINE-DEPENDENT METHYLTRANSFERASES SUPERFAMILY PROTEIN"/>
    <property type="match status" value="1"/>
</dbReference>
<dbReference type="Pfam" id="PF02527">
    <property type="entry name" value="GidB"/>
    <property type="match status" value="1"/>
</dbReference>
<dbReference type="PIRSF" id="PIRSF003078">
    <property type="entry name" value="GidB"/>
    <property type="match status" value="1"/>
</dbReference>
<dbReference type="SUPFAM" id="SSF53335">
    <property type="entry name" value="S-adenosyl-L-methionine-dependent methyltransferases"/>
    <property type="match status" value="1"/>
</dbReference>
<protein>
    <recommendedName>
        <fullName evidence="1">Ribosomal RNA small subunit methyltransferase G</fullName>
        <ecNumber evidence="1">2.1.1.170</ecNumber>
    </recommendedName>
    <alternativeName>
        <fullName evidence="1">16S rRNA 7-methylguanosine methyltransferase</fullName>
        <shortName evidence="1">16S rRNA m7G methyltransferase</shortName>
    </alternativeName>
</protein>
<proteinExistence type="inferred from homology"/>
<accession>Q14FV3</accession>
<reference key="1">
    <citation type="journal article" date="2007" name="PLoS ONE">
        <title>Genome sequencing shows that European isolates of Francisella tularensis subspecies tularensis are almost identical to US laboratory strain Schu S4.</title>
        <authorList>
            <person name="Chaudhuri R.R."/>
            <person name="Ren C.-P."/>
            <person name="Desmond L."/>
            <person name="Vincent G.A."/>
            <person name="Silman N.J."/>
            <person name="Brehm J.K."/>
            <person name="Elmore M.J."/>
            <person name="Hudson M.J."/>
            <person name="Forsman M."/>
            <person name="Isherwood K.E."/>
            <person name="Gurycova D."/>
            <person name="Minton N.P."/>
            <person name="Titball R.W."/>
            <person name="Pallen M.J."/>
            <person name="Vipond R."/>
        </authorList>
    </citation>
    <scope>NUCLEOTIDE SEQUENCE [LARGE SCALE GENOMIC DNA]</scope>
    <source>
        <strain>FSC 198</strain>
    </source>
</reference>
<evidence type="ECO:0000255" key="1">
    <source>
        <dbReference type="HAMAP-Rule" id="MF_00074"/>
    </source>
</evidence>
<organism>
    <name type="scientific">Francisella tularensis subsp. tularensis (strain FSC 198)</name>
    <dbReference type="NCBI Taxonomy" id="393115"/>
    <lineage>
        <taxon>Bacteria</taxon>
        <taxon>Pseudomonadati</taxon>
        <taxon>Pseudomonadota</taxon>
        <taxon>Gammaproteobacteria</taxon>
        <taxon>Thiotrichales</taxon>
        <taxon>Francisellaceae</taxon>
        <taxon>Francisella</taxon>
    </lineage>
</organism>
<gene>
    <name evidence="1" type="primary">rsmG</name>
    <name type="ordered locus">FTF1687c</name>
</gene>
<keyword id="KW-0963">Cytoplasm</keyword>
<keyword id="KW-0489">Methyltransferase</keyword>
<keyword id="KW-0698">rRNA processing</keyword>
<keyword id="KW-0949">S-adenosyl-L-methionine</keyword>
<keyword id="KW-0808">Transferase</keyword>
<name>RSMG_FRAT1</name>